<comment type="function">
    <text evidence="3 7">Responsible for the thiolytic cleavage of straight chain 3-keto fatty acyl-CoAs (3-oxoacyl-CoAs) (Probable). Plays an important role in fatty acid peroxisomal beta-oxidation (Probable). Catalyzes the cleavage of short, medium, long, and very long straight chain 3-oxoacyl-CoAs (By similarity).</text>
</comment>
<comment type="catalytic activity">
    <reaction evidence="7">
        <text>an acyl-CoA + acetyl-CoA = a 3-oxoacyl-CoA + CoA</text>
        <dbReference type="Rhea" id="RHEA:21564"/>
        <dbReference type="ChEBI" id="CHEBI:57287"/>
        <dbReference type="ChEBI" id="CHEBI:57288"/>
        <dbReference type="ChEBI" id="CHEBI:58342"/>
        <dbReference type="ChEBI" id="CHEBI:90726"/>
        <dbReference type="EC" id="2.3.1.16"/>
    </reaction>
    <physiologicalReaction direction="right-to-left" evidence="7">
        <dbReference type="Rhea" id="RHEA:21566"/>
    </physiologicalReaction>
</comment>
<comment type="catalytic activity">
    <reaction evidence="3">
        <text>2 acetyl-CoA = acetoacetyl-CoA + CoA</text>
        <dbReference type="Rhea" id="RHEA:21036"/>
        <dbReference type="ChEBI" id="CHEBI:57286"/>
        <dbReference type="ChEBI" id="CHEBI:57287"/>
        <dbReference type="ChEBI" id="CHEBI:57288"/>
        <dbReference type="EC" id="2.3.1.9"/>
    </reaction>
    <physiologicalReaction direction="right-to-left" evidence="3">
        <dbReference type="Rhea" id="RHEA:21038"/>
    </physiologicalReaction>
</comment>
<comment type="catalytic activity">
    <reaction evidence="3">
        <text>tetradecanoyl-CoA + acetyl-CoA = 3-oxohexadecanoyl-CoA + CoA</text>
        <dbReference type="Rhea" id="RHEA:18161"/>
        <dbReference type="ChEBI" id="CHEBI:57287"/>
        <dbReference type="ChEBI" id="CHEBI:57288"/>
        <dbReference type="ChEBI" id="CHEBI:57349"/>
        <dbReference type="ChEBI" id="CHEBI:57385"/>
        <dbReference type="EC" id="2.3.1.155"/>
    </reaction>
    <physiologicalReaction direction="right-to-left" evidence="3">
        <dbReference type="Rhea" id="RHEA:18163"/>
    </physiologicalReaction>
</comment>
<comment type="catalytic activity">
    <reaction evidence="7">
        <text>hexanoyl-CoA + acetyl-CoA = 3-oxooctanoyl-CoA + CoA</text>
        <dbReference type="Rhea" id="RHEA:31203"/>
        <dbReference type="ChEBI" id="CHEBI:57287"/>
        <dbReference type="ChEBI" id="CHEBI:57288"/>
        <dbReference type="ChEBI" id="CHEBI:62619"/>
        <dbReference type="ChEBI" id="CHEBI:62620"/>
    </reaction>
    <physiologicalReaction direction="right-to-left" evidence="7">
        <dbReference type="Rhea" id="RHEA:31205"/>
    </physiologicalReaction>
</comment>
<comment type="catalytic activity">
    <reaction evidence="3">
        <text>3-oxohexadecanedioyl-CoA + CoA = tetradecanedioyl-CoA + acetyl-CoA</text>
        <dbReference type="Rhea" id="RHEA:40343"/>
        <dbReference type="ChEBI" id="CHEBI:57287"/>
        <dbReference type="ChEBI" id="CHEBI:57288"/>
        <dbReference type="ChEBI" id="CHEBI:77081"/>
        <dbReference type="ChEBI" id="CHEBI:77084"/>
    </reaction>
    <physiologicalReaction direction="left-to-right" evidence="3">
        <dbReference type="Rhea" id="RHEA:40344"/>
    </physiologicalReaction>
</comment>
<comment type="catalytic activity">
    <reaction evidence="2">
        <text>3-oxo-(6Z,9Z,12Z,15Z,18Z,21Z)-tetracosahexaenoyl-CoA + CoA = (4Z,7Z,10Z,13Z,16Z,19Z)-docosahexaenoyl-CoA + acetyl-CoA</text>
        <dbReference type="Rhea" id="RHEA:39131"/>
        <dbReference type="ChEBI" id="CHEBI:57287"/>
        <dbReference type="ChEBI" id="CHEBI:57288"/>
        <dbReference type="ChEBI" id="CHEBI:74298"/>
        <dbReference type="ChEBI" id="CHEBI:74304"/>
    </reaction>
    <physiologicalReaction direction="left-to-right" evidence="2">
        <dbReference type="Rhea" id="RHEA:39132"/>
    </physiologicalReaction>
</comment>
<comment type="pathway">
    <text evidence="7">Lipid metabolism; peroxisomal fatty acid beta-oxidation.</text>
</comment>
<comment type="subunit">
    <text evidence="2">Homodimer. Interacts (via PTS2-type peroxisomal targeting signal region) with PEX7; leading to its translocation into peroxisomes.</text>
</comment>
<comment type="subcellular location">
    <subcellularLocation>
        <location evidence="2">Peroxisome</location>
    </subcellularLocation>
    <text evidence="2">Transported into peroxisomes following association with PEX7.</text>
</comment>
<comment type="tissue specificity">
    <text evidence="5">Mainly expressed in liver and intestine.</text>
</comment>
<comment type="domain">
    <text evidence="2">The PTS2-type peroxisomal targeting signal, which mediates interaction with PEX7 and localization to peroxisomes, is cleaved following import into peroxisomes.</text>
</comment>
<comment type="similarity">
    <text evidence="6">Belongs to the thiolase-like superfamily. Thiolase family.</text>
</comment>
<sequence length="424" mass="43953">MHRLQVVLGHLAGRPESSSALQAAPCSARFPQASASDVVVVHGRRTPIGRASRGGFKNTTPDELLSAVLTAVLQDVRLKPEQLGDISVGNVLEPGAGAVMARIAQFLSGIPETVPLSTVNRQCSSGLQAVANIAGGIRNGSYDIGMACGVESMSLSGMGNPGNISSRLLESEKARDCLTPMGMTSENVAERFGISRQKQDDFALASQQKAASAQSRGCFRAEIVPVTTTVLDDKGDKKTITVSQDEGVRPSTTMQGLAKLKPAFKDGGSTTAGNSSQVSDGAAAVLLARRSKAEELGLPILGVLRSYAVVGVPPDVMGIGPAYAIPAALQKAGLTVNDIDIFEINEAFASQAVYCVEKLGIPAEKVNPLGGAIALGHPLGCTGARQVVTLLNELKRRGRRAYGVVSMCIGTGMGAAAVFEYPGN</sequence>
<protein>
    <recommendedName>
        <fullName evidence="6">3-ketoacyl-CoA thiolase A, peroxisomal</fullName>
        <ecNumber evidence="7">2.3.1.16</ecNumber>
    </recommendedName>
    <alternativeName>
        <fullName>Acetyl-CoA C-myristoyltransferase</fullName>
        <ecNumber evidence="3">2.3.1.155</ecNumber>
    </alternativeName>
    <alternativeName>
        <fullName>Acetyl-CoA acyltransferase A</fullName>
        <ecNumber evidence="3">2.3.1.9</ecNumber>
    </alternativeName>
    <alternativeName>
        <fullName>Beta-ketothiolase A</fullName>
    </alternativeName>
    <alternativeName>
        <fullName>Peroxisomal 3-oxoacyl-CoA thiolase A</fullName>
    </alternativeName>
</protein>
<keyword id="KW-0007">Acetylation</keyword>
<keyword id="KW-0012">Acyltransferase</keyword>
<keyword id="KW-0276">Fatty acid metabolism</keyword>
<keyword id="KW-0443">Lipid metabolism</keyword>
<keyword id="KW-0576">Peroxisome</keyword>
<keyword id="KW-1185">Reference proteome</keyword>
<keyword id="KW-0808">Transferase</keyword>
<keyword id="KW-0809">Transit peptide</keyword>
<gene>
    <name evidence="8" type="primary">Acaa1a</name>
    <name type="synonym">Acaa1</name>
</gene>
<name>THIKA_MOUSE</name>
<accession>Q921H8</accession>
<proteinExistence type="evidence at protein level"/>
<evidence type="ECO:0000250" key="1"/>
<evidence type="ECO:0000250" key="2">
    <source>
        <dbReference type="UniProtKB" id="P09110"/>
    </source>
</evidence>
<evidence type="ECO:0000250" key="3">
    <source>
        <dbReference type="UniProtKB" id="P21775"/>
    </source>
</evidence>
<evidence type="ECO:0000255" key="4">
    <source>
        <dbReference type="PROSITE-ProRule" id="PRU10020"/>
    </source>
</evidence>
<evidence type="ECO:0000269" key="5">
    <source>
    </source>
</evidence>
<evidence type="ECO:0000305" key="6"/>
<evidence type="ECO:0000305" key="7">
    <source>
    </source>
</evidence>
<evidence type="ECO:0000312" key="8">
    <source>
        <dbReference type="MGI" id="MGI:2148491"/>
    </source>
</evidence>
<evidence type="ECO:0007744" key="9">
    <source>
    </source>
</evidence>
<organism>
    <name type="scientific">Mus musculus</name>
    <name type="common">Mouse</name>
    <dbReference type="NCBI Taxonomy" id="10090"/>
    <lineage>
        <taxon>Eukaryota</taxon>
        <taxon>Metazoa</taxon>
        <taxon>Chordata</taxon>
        <taxon>Craniata</taxon>
        <taxon>Vertebrata</taxon>
        <taxon>Euteleostomi</taxon>
        <taxon>Mammalia</taxon>
        <taxon>Eutheria</taxon>
        <taxon>Euarchontoglires</taxon>
        <taxon>Glires</taxon>
        <taxon>Rodentia</taxon>
        <taxon>Myomorpha</taxon>
        <taxon>Muroidea</taxon>
        <taxon>Muridae</taxon>
        <taxon>Murinae</taxon>
        <taxon>Mus</taxon>
        <taxon>Mus</taxon>
    </lineage>
</organism>
<reference key="1">
    <citation type="journal article" date="2004" name="BMC Biochem.">
        <title>Molecular cloning, gene structure and expression profile of two mouse peroxisomal 3-ketoacyl-CoA thiolase genes.</title>
        <authorList>
            <person name="Chevillard G."/>
            <person name="Clemencet M.-C."/>
            <person name="Etienne P."/>
            <person name="Martin P."/>
            <person name="Pineau T."/>
            <person name="Latruffe N."/>
            <person name="Nicolas-Frances V."/>
        </authorList>
    </citation>
    <scope>NUCLEOTIDE SEQUENCE [GENOMIC DNA / MRNA]</scope>
    <scope>TISSUE SPECIFICITY</scope>
    <scope>CATALYTIC ACTIVITY</scope>
    <scope>FUNCTION</scope>
    <scope>PATHWAY</scope>
    <source>
        <strain>129/Sv</strain>
        <strain>C57BL/6J</strain>
        <tissue>Liver</tissue>
    </source>
</reference>
<reference key="2">
    <citation type="journal article" date="2004" name="Genome Res.">
        <title>The status, quality, and expansion of the NIH full-length cDNA project: the Mammalian Gene Collection (MGC).</title>
        <authorList>
            <consortium name="The MGC Project Team"/>
        </authorList>
    </citation>
    <scope>NUCLEOTIDE SEQUENCE [LARGE SCALE MRNA]</scope>
    <source>
        <strain>FVB/N</strain>
        <tissue>Mammary tumor</tissue>
    </source>
</reference>
<reference key="3">
    <citation type="journal article" date="2010" name="Cell">
        <title>A tissue-specific atlas of mouse protein phosphorylation and expression.</title>
        <authorList>
            <person name="Huttlin E.L."/>
            <person name="Jedrychowski M.P."/>
            <person name="Elias J.E."/>
            <person name="Goswami T."/>
            <person name="Rad R."/>
            <person name="Beausoleil S.A."/>
            <person name="Villen J."/>
            <person name="Haas W."/>
            <person name="Sowa M.E."/>
            <person name="Gygi S.P."/>
        </authorList>
    </citation>
    <scope>IDENTIFICATION BY MASS SPECTROMETRY [LARGE SCALE ANALYSIS]</scope>
    <source>
        <tissue>Brain</tissue>
        <tissue>Brown adipose tissue</tissue>
        <tissue>Heart</tissue>
        <tissue>Kidney</tissue>
        <tissue>Liver</tissue>
        <tissue>Lung</tissue>
        <tissue>Pancreas</tissue>
        <tissue>Spleen</tissue>
        <tissue>Testis</tissue>
    </source>
</reference>
<reference key="4">
    <citation type="journal article" date="2013" name="Proc. Natl. Acad. Sci. U.S.A.">
        <title>Label-free quantitative proteomics of the lysine acetylome in mitochondria identifies substrates of SIRT3 in metabolic pathways.</title>
        <authorList>
            <person name="Rardin M.J."/>
            <person name="Newman J.C."/>
            <person name="Held J.M."/>
            <person name="Cusack M.P."/>
            <person name="Sorensen D.J."/>
            <person name="Li B."/>
            <person name="Schilling B."/>
            <person name="Mooney S.D."/>
            <person name="Kahn C.R."/>
            <person name="Verdin E."/>
            <person name="Gibson B.W."/>
        </authorList>
    </citation>
    <scope>ACETYLATION [LARGE SCALE ANALYSIS] AT LYS-173 AND LYS-234</scope>
    <scope>IDENTIFICATION BY MASS SPECTROMETRY [LARGE SCALE ANALYSIS]</scope>
    <source>
        <tissue>Liver</tissue>
    </source>
</reference>
<dbReference type="EC" id="2.3.1.16" evidence="7"/>
<dbReference type="EC" id="2.3.1.155" evidence="3"/>
<dbReference type="EC" id="2.3.1.9" evidence="3"/>
<dbReference type="EMBL" id="AY273811">
    <property type="protein sequence ID" value="AAP31668.1"/>
    <property type="molecule type" value="mRNA"/>
</dbReference>
<dbReference type="EMBL" id="AY304542">
    <property type="protein sequence ID" value="AAP72964.1"/>
    <property type="molecule type" value="Genomic_DNA"/>
</dbReference>
<dbReference type="EMBL" id="BC012400">
    <property type="protein sequence ID" value="AAH12400.1"/>
    <property type="molecule type" value="mRNA"/>
</dbReference>
<dbReference type="CCDS" id="CCDS23613.1"/>
<dbReference type="RefSeq" id="NP_001408349.1">
    <property type="nucleotide sequence ID" value="NM_001421420.1"/>
</dbReference>
<dbReference type="RefSeq" id="NP_570934.1">
    <property type="nucleotide sequence ID" value="NM_130864.3"/>
</dbReference>
<dbReference type="RefSeq" id="XP_006511986.1">
    <property type="nucleotide sequence ID" value="XM_006511923.1"/>
</dbReference>
<dbReference type="RefSeq" id="XP_030099878.1">
    <property type="nucleotide sequence ID" value="XM_030244018.2"/>
</dbReference>
<dbReference type="RefSeq" id="XP_030099879.1">
    <property type="nucleotide sequence ID" value="XM_030244019.2"/>
</dbReference>
<dbReference type="SMR" id="Q921H8"/>
<dbReference type="BioGRID" id="227535">
    <property type="interactions" value="6"/>
</dbReference>
<dbReference type="FunCoup" id="Q921H8">
    <property type="interactions" value="1708"/>
</dbReference>
<dbReference type="IntAct" id="Q921H8">
    <property type="interactions" value="4"/>
</dbReference>
<dbReference type="MINT" id="Q921H8"/>
<dbReference type="STRING" id="10090.ENSMUSP00000042351"/>
<dbReference type="GlyGen" id="Q921H8">
    <property type="glycosylation" value="2 sites, 1 N-linked glycan (1 site), 1 O-linked glycan (1 site)"/>
</dbReference>
<dbReference type="iPTMnet" id="Q921H8"/>
<dbReference type="PhosphoSitePlus" id="Q921H8"/>
<dbReference type="SwissPalm" id="Q921H8"/>
<dbReference type="jPOST" id="Q921H8"/>
<dbReference type="PaxDb" id="10090-ENSMUSP00000042351"/>
<dbReference type="PeptideAtlas" id="Q921H8"/>
<dbReference type="ProteomicsDB" id="262916"/>
<dbReference type="Pumba" id="Q921H8"/>
<dbReference type="Ensembl" id="ENSMUST00000039784.12">
    <property type="protein sequence ID" value="ENSMUSP00000042351.6"/>
    <property type="gene ID" value="ENSMUSG00000036138.17"/>
</dbReference>
<dbReference type="GeneID" id="113868"/>
<dbReference type="KEGG" id="mmu:113868"/>
<dbReference type="UCSC" id="uc009sas.1">
    <property type="organism name" value="mouse"/>
</dbReference>
<dbReference type="AGR" id="MGI:2148491"/>
<dbReference type="CTD" id="113868"/>
<dbReference type="MGI" id="MGI:2148491">
    <property type="gene designation" value="Acaa1a"/>
</dbReference>
<dbReference type="VEuPathDB" id="HostDB:ENSMUSG00000036138"/>
<dbReference type="eggNOG" id="KOG1389">
    <property type="taxonomic scope" value="Eukaryota"/>
</dbReference>
<dbReference type="GeneTree" id="ENSGT01030000234626"/>
<dbReference type="HOGENOM" id="CLU_031026_1_1_1"/>
<dbReference type="InParanoid" id="Q921H8"/>
<dbReference type="OMA" id="QMGMDHL"/>
<dbReference type="OrthoDB" id="5404651at2759"/>
<dbReference type="PhylomeDB" id="Q921H8"/>
<dbReference type="TreeFam" id="TF332308"/>
<dbReference type="BRENDA" id="2.3.1.16">
    <property type="organism ID" value="3474"/>
</dbReference>
<dbReference type="UniPathway" id="UPA00661"/>
<dbReference type="BioGRID-ORCS" id="113868">
    <property type="hits" value="2 hits in 79 CRISPR screens"/>
</dbReference>
<dbReference type="ChiTaRS" id="Acaa1a">
    <property type="organism name" value="mouse"/>
</dbReference>
<dbReference type="PRO" id="PR:Q921H8"/>
<dbReference type="Proteomes" id="UP000000589">
    <property type="component" value="Chromosome 9"/>
</dbReference>
<dbReference type="RNAct" id="Q921H8">
    <property type="molecule type" value="protein"/>
</dbReference>
<dbReference type="Bgee" id="ENSMUSG00000036138">
    <property type="expression patterns" value="Expressed in ileal epithelium and 288 other cell types or tissues"/>
</dbReference>
<dbReference type="ExpressionAtlas" id="Q921H8">
    <property type="expression patterns" value="baseline and differential"/>
</dbReference>
<dbReference type="GO" id="GO:0005739">
    <property type="term" value="C:mitochondrion"/>
    <property type="evidence" value="ECO:0007005"/>
    <property type="project" value="MGI"/>
</dbReference>
<dbReference type="GO" id="GO:0005782">
    <property type="term" value="C:peroxisomal matrix"/>
    <property type="evidence" value="ECO:0000304"/>
    <property type="project" value="Reactome"/>
</dbReference>
<dbReference type="GO" id="GO:0005777">
    <property type="term" value="C:peroxisome"/>
    <property type="evidence" value="ECO:0000314"/>
    <property type="project" value="UniProtKB"/>
</dbReference>
<dbReference type="GO" id="GO:0003985">
    <property type="term" value="F:acetyl-CoA C-acetyltransferase activity"/>
    <property type="evidence" value="ECO:0000304"/>
    <property type="project" value="MGI"/>
</dbReference>
<dbReference type="GO" id="GO:0003988">
    <property type="term" value="F:acetyl-CoA C-acyltransferase activity"/>
    <property type="evidence" value="ECO:0000316"/>
    <property type="project" value="MGI"/>
</dbReference>
<dbReference type="GO" id="GO:0050633">
    <property type="term" value="F:acetyl-CoA C-myristoyltransferase activity"/>
    <property type="evidence" value="ECO:0000250"/>
    <property type="project" value="UniProtKB"/>
</dbReference>
<dbReference type="GO" id="GO:0036109">
    <property type="term" value="P:alpha-linolenic acid metabolic process"/>
    <property type="evidence" value="ECO:0000314"/>
    <property type="project" value="MGI"/>
</dbReference>
<dbReference type="GO" id="GO:0008206">
    <property type="term" value="P:bile acid metabolic process"/>
    <property type="evidence" value="ECO:0000250"/>
    <property type="project" value="UniProtKB"/>
</dbReference>
<dbReference type="GO" id="GO:0006635">
    <property type="term" value="P:fatty acid beta-oxidation"/>
    <property type="evidence" value="ECO:0000250"/>
    <property type="project" value="UniProtKB"/>
</dbReference>
<dbReference type="GO" id="GO:0033540">
    <property type="term" value="P:fatty acid beta-oxidation using acyl-CoA oxidase"/>
    <property type="evidence" value="ECO:0000266"/>
    <property type="project" value="MGI"/>
</dbReference>
<dbReference type="GO" id="GO:1901570">
    <property type="term" value="P:fatty acid derivative biosynthetic process"/>
    <property type="evidence" value="ECO:0000314"/>
    <property type="project" value="MGI"/>
</dbReference>
<dbReference type="GO" id="GO:0006631">
    <property type="term" value="P:fatty acid metabolic process"/>
    <property type="evidence" value="ECO:0000304"/>
    <property type="project" value="MGI"/>
</dbReference>
<dbReference type="GO" id="GO:0042759">
    <property type="term" value="P:long-chain fatty acid biosynthetic process"/>
    <property type="evidence" value="ECO:0000314"/>
    <property type="project" value="MGI"/>
</dbReference>
<dbReference type="GO" id="GO:0006636">
    <property type="term" value="P:unsaturated fatty acid biosynthetic process"/>
    <property type="evidence" value="ECO:0000314"/>
    <property type="project" value="MGI"/>
</dbReference>
<dbReference type="CDD" id="cd00751">
    <property type="entry name" value="thiolase"/>
    <property type="match status" value="1"/>
</dbReference>
<dbReference type="FunFam" id="3.40.47.10:FF:000035">
    <property type="entry name" value="3-ketoacyl-CoA thiolase A, peroxisomal"/>
    <property type="match status" value="1"/>
</dbReference>
<dbReference type="Gene3D" id="3.40.47.10">
    <property type="match status" value="1"/>
</dbReference>
<dbReference type="InterPro" id="IPR002155">
    <property type="entry name" value="Thiolase"/>
</dbReference>
<dbReference type="InterPro" id="IPR016039">
    <property type="entry name" value="Thiolase-like"/>
</dbReference>
<dbReference type="InterPro" id="IPR050215">
    <property type="entry name" value="Thiolase-like_sf_Thiolase"/>
</dbReference>
<dbReference type="InterPro" id="IPR020615">
    <property type="entry name" value="Thiolase_acyl_enz_int_AS"/>
</dbReference>
<dbReference type="InterPro" id="IPR020610">
    <property type="entry name" value="Thiolase_AS"/>
</dbReference>
<dbReference type="InterPro" id="IPR020617">
    <property type="entry name" value="Thiolase_C"/>
</dbReference>
<dbReference type="InterPro" id="IPR020613">
    <property type="entry name" value="Thiolase_CS"/>
</dbReference>
<dbReference type="InterPro" id="IPR020616">
    <property type="entry name" value="Thiolase_N"/>
</dbReference>
<dbReference type="NCBIfam" id="TIGR01930">
    <property type="entry name" value="AcCoA-C-Actrans"/>
    <property type="match status" value="1"/>
</dbReference>
<dbReference type="PANTHER" id="PTHR43853:SF19">
    <property type="entry name" value="3-KETOACYL-COA THIOLASE A, PEROXISOMAL"/>
    <property type="match status" value="1"/>
</dbReference>
<dbReference type="PANTHER" id="PTHR43853">
    <property type="entry name" value="3-KETOACYL-COA THIOLASE, PEROXISOMAL"/>
    <property type="match status" value="1"/>
</dbReference>
<dbReference type="Pfam" id="PF02803">
    <property type="entry name" value="Thiolase_C"/>
    <property type="match status" value="1"/>
</dbReference>
<dbReference type="Pfam" id="PF00108">
    <property type="entry name" value="Thiolase_N"/>
    <property type="match status" value="1"/>
</dbReference>
<dbReference type="PIRSF" id="PIRSF000429">
    <property type="entry name" value="Ac-CoA_Ac_transf"/>
    <property type="match status" value="1"/>
</dbReference>
<dbReference type="SUPFAM" id="SSF53901">
    <property type="entry name" value="Thiolase-like"/>
    <property type="match status" value="2"/>
</dbReference>
<dbReference type="PROSITE" id="PS00098">
    <property type="entry name" value="THIOLASE_1"/>
    <property type="match status" value="1"/>
</dbReference>
<dbReference type="PROSITE" id="PS00737">
    <property type="entry name" value="THIOLASE_2"/>
    <property type="match status" value="1"/>
</dbReference>
<dbReference type="PROSITE" id="PS00099">
    <property type="entry name" value="THIOLASE_3"/>
    <property type="match status" value="1"/>
</dbReference>
<feature type="transit peptide" description="Peroxisome" evidence="2">
    <location>
        <begin position="1"/>
        <end position="26"/>
    </location>
</feature>
<feature type="chain" id="PRO_0000034068" description="3-ketoacyl-CoA thiolase A, peroxisomal">
    <location>
        <begin position="27"/>
        <end position="424"/>
    </location>
</feature>
<feature type="region of interest" description="PTS2-type peroxisomal targeting signal" evidence="2">
    <location>
        <begin position="1"/>
        <end position="26"/>
    </location>
</feature>
<feature type="active site" description="Acyl-thioester intermediate" evidence="1">
    <location>
        <position position="123"/>
    </location>
</feature>
<feature type="active site" description="Proton acceptor" evidence="4">
    <location>
        <position position="377"/>
    </location>
</feature>
<feature type="active site" description="Proton acceptor" evidence="4">
    <location>
        <position position="408"/>
    </location>
</feature>
<feature type="modified residue" description="N6-acetyllysine" evidence="9">
    <location>
        <position position="173"/>
    </location>
</feature>
<feature type="modified residue" description="N6-acetyllysine" evidence="9">
    <location>
        <position position="234"/>
    </location>
</feature>